<protein>
    <recommendedName>
        <fullName>BRCA1-A complex subunit RAP80</fullName>
    </recommendedName>
    <alternativeName>
        <fullName>Receptor-associated protein 80</fullName>
    </alternativeName>
    <alternativeName>
        <fullName>Retinoid X receptor-interacting protein 110</fullName>
    </alternativeName>
    <alternativeName>
        <fullName>Ubiquitin interaction motif-containing protein 1</fullName>
    </alternativeName>
</protein>
<keyword id="KW-0002">3D-structure</keyword>
<keyword id="KW-0025">Alternative splicing</keyword>
<keyword id="KW-0156">Chromatin regulator</keyword>
<keyword id="KW-0227">DNA damage</keyword>
<keyword id="KW-0234">DNA repair</keyword>
<keyword id="KW-1017">Isopeptide bond</keyword>
<keyword id="KW-0479">Metal-binding</keyword>
<keyword id="KW-0539">Nucleus</keyword>
<keyword id="KW-0597">Phosphoprotein</keyword>
<keyword id="KW-1267">Proteomics identification</keyword>
<keyword id="KW-1185">Reference proteome</keyword>
<keyword id="KW-0677">Repeat</keyword>
<keyword id="KW-0804">Transcription</keyword>
<keyword id="KW-0805">Transcription regulation</keyword>
<keyword id="KW-0832">Ubl conjugation</keyword>
<keyword id="KW-0862">Zinc</keyword>
<keyword id="KW-0863">Zinc-finger</keyword>
<organism>
    <name type="scientific">Homo sapiens</name>
    <name type="common">Human</name>
    <dbReference type="NCBI Taxonomy" id="9606"/>
    <lineage>
        <taxon>Eukaryota</taxon>
        <taxon>Metazoa</taxon>
        <taxon>Chordata</taxon>
        <taxon>Craniata</taxon>
        <taxon>Vertebrata</taxon>
        <taxon>Euteleostomi</taxon>
        <taxon>Mammalia</taxon>
        <taxon>Eutheria</taxon>
        <taxon>Euarchontoglires</taxon>
        <taxon>Primates</taxon>
        <taxon>Haplorrhini</taxon>
        <taxon>Catarrhini</taxon>
        <taxon>Hominidae</taxon>
        <taxon>Homo</taxon>
    </lineage>
</organism>
<dbReference type="EMBL" id="AF349313">
    <property type="protein sequence ID" value="AAK61871.1"/>
    <property type="molecule type" value="mRNA"/>
</dbReference>
<dbReference type="EMBL" id="AF113538">
    <property type="protein sequence ID" value="AAF14875.1"/>
    <property type="molecule type" value="mRNA"/>
</dbReference>
<dbReference type="EMBL" id="AF284749">
    <property type="protein sequence ID" value="AAG59851.1"/>
    <property type="molecule type" value="mRNA"/>
</dbReference>
<dbReference type="EMBL" id="AF284753">
    <property type="protein sequence ID" value="AAG59855.1"/>
    <property type="molecule type" value="mRNA"/>
</dbReference>
<dbReference type="EMBL" id="AK023044">
    <property type="protein sequence ID" value="BAG51153.1"/>
    <property type="molecule type" value="mRNA"/>
</dbReference>
<dbReference type="EMBL" id="AK304794">
    <property type="protein sequence ID" value="BAG65544.1"/>
    <property type="molecule type" value="mRNA"/>
</dbReference>
<dbReference type="EMBL" id="BX537376">
    <property type="protein sequence ID" value="CAD97618.1"/>
    <property type="molecule type" value="mRNA"/>
</dbReference>
<dbReference type="EMBL" id="AC027318">
    <property type="status" value="NOT_ANNOTATED_CDS"/>
    <property type="molecule type" value="Genomic_DNA"/>
</dbReference>
<dbReference type="EMBL" id="BC006078">
    <property type="protein sequence ID" value="AAH06078.1"/>
    <property type="status" value="ALT_TERM"/>
    <property type="molecule type" value="mRNA"/>
</dbReference>
<dbReference type="EMBL" id="BC032561">
    <property type="protein sequence ID" value="AAH32561.1"/>
    <property type="molecule type" value="mRNA"/>
</dbReference>
<dbReference type="CCDS" id="CCDS4408.1">
    <molecule id="Q96RL1-1"/>
</dbReference>
<dbReference type="CCDS" id="CCDS83050.1">
    <molecule id="Q96RL1-2"/>
</dbReference>
<dbReference type="RefSeq" id="NP_001186226.1">
    <molecule id="Q96RL1-1"/>
    <property type="nucleotide sequence ID" value="NM_001199297.2"/>
</dbReference>
<dbReference type="RefSeq" id="NP_001186227.1">
    <molecule id="Q96RL1-1"/>
    <property type="nucleotide sequence ID" value="NM_001199298.2"/>
</dbReference>
<dbReference type="RefSeq" id="NP_001304890.1">
    <molecule id="Q96RL1-2"/>
    <property type="nucleotide sequence ID" value="NM_001317961.1"/>
</dbReference>
<dbReference type="RefSeq" id="NP_057374.3">
    <molecule id="Q96RL1-1"/>
    <property type="nucleotide sequence ID" value="NM_016290.4"/>
</dbReference>
<dbReference type="RefSeq" id="XP_005265987.1">
    <molecule id="Q96RL1-1"/>
    <property type="nucleotide sequence ID" value="XM_005265930.3"/>
</dbReference>
<dbReference type="RefSeq" id="XP_005265993.1">
    <property type="nucleotide sequence ID" value="XM_005265936.2"/>
</dbReference>
<dbReference type="RefSeq" id="XP_006714934.1">
    <molecule id="Q96RL1-1"/>
    <property type="nucleotide sequence ID" value="XM_006714871.3"/>
</dbReference>
<dbReference type="RefSeq" id="XP_016865063.1">
    <property type="nucleotide sequence ID" value="XM_017009574.1"/>
</dbReference>
<dbReference type="RefSeq" id="XP_016865067.1">
    <property type="nucleotide sequence ID" value="XM_017009578.1"/>
</dbReference>
<dbReference type="RefSeq" id="XP_016865068.1">
    <property type="nucleotide sequence ID" value="XM_017009579.1"/>
</dbReference>
<dbReference type="RefSeq" id="XP_054208783.1">
    <molecule id="Q96RL1-1"/>
    <property type="nucleotide sequence ID" value="XM_054352808.1"/>
</dbReference>
<dbReference type="RefSeq" id="XP_054208784.1">
    <molecule id="Q96RL1-1"/>
    <property type="nucleotide sequence ID" value="XM_054352809.1"/>
</dbReference>
<dbReference type="PDB" id="2MKF">
    <property type="method" value="NMR"/>
    <property type="chains" value="A=74-131"/>
</dbReference>
<dbReference type="PDB" id="2MKG">
    <property type="method" value="NMR"/>
    <property type="chains" value="A=74-131"/>
</dbReference>
<dbReference type="PDB" id="2N9E">
    <property type="method" value="NMR"/>
    <property type="chains" value="A=37-49"/>
</dbReference>
<dbReference type="PDB" id="2RR9">
    <property type="method" value="NMR"/>
    <property type="chains" value="C=79-124"/>
</dbReference>
<dbReference type="PDBsum" id="2MKF"/>
<dbReference type="PDBsum" id="2MKG"/>
<dbReference type="PDBsum" id="2N9E"/>
<dbReference type="PDBsum" id="2RR9"/>
<dbReference type="SMR" id="Q96RL1"/>
<dbReference type="BioGRID" id="119697">
    <property type="interactions" value="123"/>
</dbReference>
<dbReference type="ComplexPortal" id="CPX-4425">
    <property type="entry name" value="BRCA1-A complex"/>
</dbReference>
<dbReference type="CORUM" id="Q96RL1"/>
<dbReference type="DIP" id="DIP-29936N"/>
<dbReference type="FunCoup" id="Q96RL1">
    <property type="interactions" value="2823"/>
</dbReference>
<dbReference type="IntAct" id="Q96RL1">
    <property type="interactions" value="70"/>
</dbReference>
<dbReference type="MINT" id="Q96RL1"/>
<dbReference type="STRING" id="9606.ENSP00000421926"/>
<dbReference type="GlyGen" id="Q96RL1">
    <property type="glycosylation" value="1 site"/>
</dbReference>
<dbReference type="iPTMnet" id="Q96RL1"/>
<dbReference type="MetOSite" id="Q96RL1"/>
<dbReference type="PhosphoSitePlus" id="Q96RL1"/>
<dbReference type="BioMuta" id="UIMC1"/>
<dbReference type="DMDM" id="60390957"/>
<dbReference type="jPOST" id="Q96RL1"/>
<dbReference type="MassIVE" id="Q96RL1"/>
<dbReference type="PaxDb" id="9606-ENSP00000366434"/>
<dbReference type="PeptideAtlas" id="Q96RL1"/>
<dbReference type="ProteomicsDB" id="77977">
    <molecule id="Q96RL1-1"/>
</dbReference>
<dbReference type="ProteomicsDB" id="77978">
    <molecule id="Q96RL1-2"/>
</dbReference>
<dbReference type="ProteomicsDB" id="77979">
    <molecule id="Q96RL1-3"/>
</dbReference>
<dbReference type="ProteomicsDB" id="77980">
    <molecule id="Q96RL1-4"/>
</dbReference>
<dbReference type="ProteomicsDB" id="77981">
    <molecule id="Q96RL1-5"/>
</dbReference>
<dbReference type="Pumba" id="Q96RL1"/>
<dbReference type="Antibodypedia" id="29168">
    <property type="antibodies" value="269 antibodies from 35 providers"/>
</dbReference>
<dbReference type="DNASU" id="51720"/>
<dbReference type="Ensembl" id="ENST00000377227.8">
    <molecule id="Q96RL1-1"/>
    <property type="protein sequence ID" value="ENSP00000366434.4"/>
    <property type="gene ID" value="ENSG00000087206.17"/>
</dbReference>
<dbReference type="Ensembl" id="ENST00000506128.5">
    <molecule id="Q96RL1-2"/>
    <property type="protein sequence ID" value="ENSP00000427480.1"/>
    <property type="gene ID" value="ENSG00000087206.17"/>
</dbReference>
<dbReference type="Ensembl" id="ENST00000510698.2">
    <molecule id="Q96RL1-4"/>
    <property type="protein sequence ID" value="ENSP00000423717.2"/>
    <property type="gene ID" value="ENSG00000087206.17"/>
</dbReference>
<dbReference type="Ensembl" id="ENST00000511320.6">
    <molecule id="Q96RL1-1"/>
    <property type="protein sequence ID" value="ENSP00000421926.1"/>
    <property type="gene ID" value="ENSG00000087206.17"/>
</dbReference>
<dbReference type="GeneID" id="51720"/>
<dbReference type="KEGG" id="hsa:51720"/>
<dbReference type="MANE-Select" id="ENST00000511320.6">
    <property type="protein sequence ID" value="ENSP00000421926.1"/>
    <property type="RefSeq nucleotide sequence ID" value="NM_001199298.2"/>
    <property type="RefSeq protein sequence ID" value="NP_001186227.1"/>
</dbReference>
<dbReference type="UCSC" id="uc063kam.1">
    <molecule id="Q96RL1-1"/>
    <property type="organism name" value="human"/>
</dbReference>
<dbReference type="AGR" id="HGNC:30298"/>
<dbReference type="CTD" id="51720"/>
<dbReference type="DisGeNET" id="51720"/>
<dbReference type="GeneCards" id="UIMC1"/>
<dbReference type="HGNC" id="HGNC:30298">
    <property type="gene designation" value="UIMC1"/>
</dbReference>
<dbReference type="HPA" id="ENSG00000087206">
    <property type="expression patterns" value="Low tissue specificity"/>
</dbReference>
<dbReference type="MalaCards" id="UIMC1"/>
<dbReference type="MIM" id="609433">
    <property type="type" value="gene"/>
</dbReference>
<dbReference type="neXtProt" id="NX_Q96RL1"/>
<dbReference type="OpenTargets" id="ENSG00000087206"/>
<dbReference type="PharmGKB" id="PA162408624"/>
<dbReference type="VEuPathDB" id="HostDB:ENSG00000087206"/>
<dbReference type="eggNOG" id="ENOG502QQGN">
    <property type="taxonomic scope" value="Eukaryota"/>
</dbReference>
<dbReference type="GeneTree" id="ENSGT00390000007635"/>
<dbReference type="HOGENOM" id="CLU_023109_1_0_1"/>
<dbReference type="InParanoid" id="Q96RL1"/>
<dbReference type="OMA" id="PCTGHSV"/>
<dbReference type="OrthoDB" id="7536094at2759"/>
<dbReference type="PAN-GO" id="Q96RL1">
    <property type="GO annotations" value="6 GO annotations based on evolutionary models"/>
</dbReference>
<dbReference type="PhylomeDB" id="Q96RL1"/>
<dbReference type="TreeFam" id="TF336575"/>
<dbReference type="PathwayCommons" id="Q96RL1"/>
<dbReference type="Reactome" id="R-HSA-5689901">
    <property type="pathway name" value="Metalloprotease DUBs"/>
</dbReference>
<dbReference type="Reactome" id="R-HSA-5693565">
    <property type="pathway name" value="Recruitment and ATM-mediated phosphorylation of repair and signaling proteins at DNA double strand breaks"/>
</dbReference>
<dbReference type="Reactome" id="R-HSA-5693571">
    <property type="pathway name" value="Nonhomologous End-Joining (NHEJ)"/>
</dbReference>
<dbReference type="Reactome" id="R-HSA-5693607">
    <property type="pathway name" value="Processing of DNA double-strand break ends"/>
</dbReference>
<dbReference type="Reactome" id="R-HSA-69473">
    <property type="pathway name" value="G2/M DNA damage checkpoint"/>
</dbReference>
<dbReference type="SignaLink" id="Q96RL1"/>
<dbReference type="SIGNOR" id="Q96RL1"/>
<dbReference type="BioGRID-ORCS" id="51720">
    <property type="hits" value="30 hits in 1163 CRISPR screens"/>
</dbReference>
<dbReference type="ChiTaRS" id="UIMC1">
    <property type="organism name" value="human"/>
</dbReference>
<dbReference type="EvolutionaryTrace" id="Q96RL1"/>
<dbReference type="GeneWiki" id="UIMC1"/>
<dbReference type="GenomeRNAi" id="51720"/>
<dbReference type="Pharos" id="Q96RL1">
    <property type="development level" value="Tbio"/>
</dbReference>
<dbReference type="PRO" id="PR:Q96RL1"/>
<dbReference type="Proteomes" id="UP000005640">
    <property type="component" value="Chromosome 5"/>
</dbReference>
<dbReference type="RNAct" id="Q96RL1">
    <property type="molecule type" value="protein"/>
</dbReference>
<dbReference type="Bgee" id="ENSG00000087206">
    <property type="expression patterns" value="Expressed in left testis and 186 other cell types or tissues"/>
</dbReference>
<dbReference type="ExpressionAtlas" id="Q96RL1">
    <property type="expression patterns" value="baseline and differential"/>
</dbReference>
<dbReference type="GO" id="GO:0070531">
    <property type="term" value="C:BRCA1-A complex"/>
    <property type="evidence" value="ECO:0000314"/>
    <property type="project" value="UniProtKB"/>
</dbReference>
<dbReference type="GO" id="GO:0016604">
    <property type="term" value="C:nuclear body"/>
    <property type="evidence" value="ECO:0000314"/>
    <property type="project" value="HPA"/>
</dbReference>
<dbReference type="GO" id="GO:0005654">
    <property type="term" value="C:nucleoplasm"/>
    <property type="evidence" value="ECO:0000314"/>
    <property type="project" value="HPA"/>
</dbReference>
<dbReference type="GO" id="GO:0005634">
    <property type="term" value="C:nucleus"/>
    <property type="evidence" value="ECO:0000314"/>
    <property type="project" value="UniProtKB"/>
</dbReference>
<dbReference type="GO" id="GO:0035861">
    <property type="term" value="C:site of double-strand break"/>
    <property type="evidence" value="ECO:0000314"/>
    <property type="project" value="UniProt"/>
</dbReference>
<dbReference type="GO" id="GO:0003677">
    <property type="term" value="F:DNA binding"/>
    <property type="evidence" value="ECO:0007669"/>
    <property type="project" value="InterPro"/>
</dbReference>
<dbReference type="GO" id="GO:0042393">
    <property type="term" value="F:histone binding"/>
    <property type="evidence" value="ECO:0000314"/>
    <property type="project" value="UniProtKB"/>
</dbReference>
<dbReference type="GO" id="GO:0070530">
    <property type="term" value="F:K63-linked polyubiquitin modification-dependent protein binding"/>
    <property type="evidence" value="ECO:0000314"/>
    <property type="project" value="UniProtKB"/>
</dbReference>
<dbReference type="GO" id="GO:0061649">
    <property type="term" value="F:ubiquitin-modified histone reader activity"/>
    <property type="evidence" value="ECO:0000314"/>
    <property type="project" value="UniProt"/>
</dbReference>
<dbReference type="GO" id="GO:0008270">
    <property type="term" value="F:zinc ion binding"/>
    <property type="evidence" value="ECO:0007669"/>
    <property type="project" value="UniProtKB-KW"/>
</dbReference>
<dbReference type="GO" id="GO:0140861">
    <property type="term" value="P:DNA repair-dependent chromatin remodeling"/>
    <property type="evidence" value="ECO:0000315"/>
    <property type="project" value="UniProtKB"/>
</dbReference>
<dbReference type="GO" id="GO:0006302">
    <property type="term" value="P:double-strand break repair"/>
    <property type="evidence" value="ECO:0000315"/>
    <property type="project" value="UniProtKB"/>
</dbReference>
<dbReference type="GO" id="GO:0007095">
    <property type="term" value="P:mitotic G2 DNA damage checkpoint signaling"/>
    <property type="evidence" value="ECO:0000315"/>
    <property type="project" value="UniProtKB"/>
</dbReference>
<dbReference type="GO" id="GO:0044818">
    <property type="term" value="P:mitotic G2/M transition checkpoint"/>
    <property type="evidence" value="ECO:0000303"/>
    <property type="project" value="ComplexPortal"/>
</dbReference>
<dbReference type="GO" id="GO:0045892">
    <property type="term" value="P:negative regulation of DNA-templated transcription"/>
    <property type="evidence" value="ECO:0000314"/>
    <property type="project" value="HGNC-UCL"/>
</dbReference>
<dbReference type="GO" id="GO:0045739">
    <property type="term" value="P:positive regulation of DNA repair"/>
    <property type="evidence" value="ECO:0000315"/>
    <property type="project" value="UniProtKB"/>
</dbReference>
<dbReference type="GO" id="GO:0006282">
    <property type="term" value="P:regulation of DNA repair"/>
    <property type="evidence" value="ECO:0000303"/>
    <property type="project" value="ComplexPortal"/>
</dbReference>
<dbReference type="GO" id="GO:0010212">
    <property type="term" value="P:response to ionizing radiation"/>
    <property type="evidence" value="ECO:0000315"/>
    <property type="project" value="UniProtKB"/>
</dbReference>
<dbReference type="CDD" id="cd20912">
    <property type="entry name" value="AIR_RAP80-like"/>
    <property type="match status" value="1"/>
</dbReference>
<dbReference type="Gene3D" id="6.10.250.1800">
    <property type="match status" value="1"/>
</dbReference>
<dbReference type="InterPro" id="IPR006642">
    <property type="entry name" value="Rad18_UBZ4"/>
</dbReference>
<dbReference type="InterPro" id="IPR038868">
    <property type="entry name" value="RAP80"/>
</dbReference>
<dbReference type="InterPro" id="IPR040714">
    <property type="entry name" value="RAP80_UIM"/>
</dbReference>
<dbReference type="InterPro" id="IPR003903">
    <property type="entry name" value="UIM_dom"/>
</dbReference>
<dbReference type="PANTHER" id="PTHR15932:SF2">
    <property type="entry name" value="BRCA1-A COMPLEX SUBUNIT RAP80"/>
    <property type="match status" value="1"/>
</dbReference>
<dbReference type="PANTHER" id="PTHR15932">
    <property type="entry name" value="UBIQUITIN INTERACTION MOTIF-CONTAINING PROTEIN 1"/>
    <property type="match status" value="1"/>
</dbReference>
<dbReference type="Pfam" id="PF18282">
    <property type="entry name" value="RAP80_UIM"/>
    <property type="match status" value="1"/>
</dbReference>
<dbReference type="SMART" id="SM00726">
    <property type="entry name" value="UIM"/>
    <property type="match status" value="2"/>
</dbReference>
<dbReference type="PROSITE" id="PS50330">
    <property type="entry name" value="UIM"/>
    <property type="match status" value="1"/>
</dbReference>
<dbReference type="PROSITE" id="PS51908">
    <property type="entry name" value="ZF_UBZ4"/>
    <property type="match status" value="1"/>
</dbReference>
<evidence type="ECO:0000250" key="1">
    <source>
        <dbReference type="UniProtKB" id="Q5PQK4"/>
    </source>
</evidence>
<evidence type="ECO:0000250" key="2">
    <source>
        <dbReference type="UniProtKB" id="Q5U5Q9"/>
    </source>
</evidence>
<evidence type="ECO:0000255" key="3">
    <source>
        <dbReference type="PROSITE-ProRule" id="PRU00213"/>
    </source>
</evidence>
<evidence type="ECO:0000255" key="4">
    <source>
        <dbReference type="PROSITE-ProRule" id="PRU01256"/>
    </source>
</evidence>
<evidence type="ECO:0000256" key="5">
    <source>
        <dbReference type="SAM" id="MobiDB-lite"/>
    </source>
</evidence>
<evidence type="ECO:0000269" key="6">
    <source>
    </source>
</evidence>
<evidence type="ECO:0000269" key="7">
    <source>
    </source>
</evidence>
<evidence type="ECO:0000269" key="8">
    <source>
    </source>
</evidence>
<evidence type="ECO:0000269" key="9">
    <source>
    </source>
</evidence>
<evidence type="ECO:0000269" key="10">
    <source>
    </source>
</evidence>
<evidence type="ECO:0000269" key="11">
    <source>
    </source>
</evidence>
<evidence type="ECO:0000269" key="12">
    <source>
    </source>
</evidence>
<evidence type="ECO:0000269" key="13">
    <source>
    </source>
</evidence>
<evidence type="ECO:0000269" key="14">
    <source>
    </source>
</evidence>
<evidence type="ECO:0000269" key="15">
    <source>
    </source>
</evidence>
<evidence type="ECO:0000269" key="16">
    <source>
    </source>
</evidence>
<evidence type="ECO:0000269" key="17">
    <source>
    </source>
</evidence>
<evidence type="ECO:0000269" key="18">
    <source>
    </source>
</evidence>
<evidence type="ECO:0000269" key="19">
    <source>
    </source>
</evidence>
<evidence type="ECO:0000269" key="20">
    <source>
    </source>
</evidence>
<evidence type="ECO:0000269" key="21">
    <source>
    </source>
</evidence>
<evidence type="ECO:0000269" key="22">
    <source>
    </source>
</evidence>
<evidence type="ECO:0000269" key="23">
    <source>
    </source>
</evidence>
<evidence type="ECO:0000269" key="24">
    <source>
    </source>
</evidence>
<evidence type="ECO:0000269" key="25">
    <source>
    </source>
</evidence>
<evidence type="ECO:0000269" key="26">
    <source>
    </source>
</evidence>
<evidence type="ECO:0000269" key="27">
    <source ref="38"/>
</evidence>
<evidence type="ECO:0000303" key="28">
    <source>
    </source>
</evidence>
<evidence type="ECO:0000303" key="29">
    <source>
    </source>
</evidence>
<evidence type="ECO:0000303" key="30">
    <source ref="2"/>
</evidence>
<evidence type="ECO:0000303" key="31">
    <source ref="3"/>
</evidence>
<evidence type="ECO:0000305" key="32"/>
<evidence type="ECO:0007744" key="33">
    <source>
    </source>
</evidence>
<evidence type="ECO:0007744" key="34">
    <source>
    </source>
</evidence>
<evidence type="ECO:0007744" key="35">
    <source>
    </source>
</evidence>
<evidence type="ECO:0007744" key="36">
    <source>
    </source>
</evidence>
<evidence type="ECO:0007744" key="37">
    <source>
    </source>
</evidence>
<evidence type="ECO:0007744" key="38">
    <source>
    </source>
</evidence>
<evidence type="ECO:0007744" key="39">
    <source>
    </source>
</evidence>
<evidence type="ECO:0007744" key="40">
    <source>
    </source>
</evidence>
<evidence type="ECO:0007744" key="41">
    <source>
    </source>
</evidence>
<evidence type="ECO:0007744" key="42">
    <source>
    </source>
</evidence>
<evidence type="ECO:0007829" key="43">
    <source>
        <dbReference type="PDB" id="2MKF"/>
    </source>
</evidence>
<evidence type="ECO:0007829" key="44">
    <source>
        <dbReference type="PDB" id="2N9E"/>
    </source>
</evidence>
<reference key="1">
    <citation type="journal article" date="2002" name="J. Biol. Chem.">
        <title>RAP80: a novel nuclear protein that interacts with the retinoid-related testis-associated receptor.</title>
        <authorList>
            <person name="Yan Z."/>
            <person name="Kim Y.-S."/>
            <person name="Jetten A.M."/>
        </authorList>
    </citation>
    <scope>NUCLEOTIDE SEQUENCE [MRNA] (ISOFORM 1)</scope>
    <scope>FUNCTION IN TRANSCRIPTIONAL REPRESSION</scope>
    <scope>INTERACTION WITH NR6A1</scope>
    <scope>SUBCELLULAR LOCATION</scope>
    <scope>TISSUE SPECIFICITY</scope>
    <source>
        <tissue>Testis</tissue>
    </source>
</reference>
<reference key="2">
    <citation type="submission" date="1998-12" db="EMBL/GenBank/DDBJ databases">
        <title>A novel gene expressed in the human hypothalamus.</title>
        <authorList>
            <person name="Peng Y."/>
            <person name="Gu Y."/>
            <person name="Gu J."/>
            <person name="Huang Q."/>
            <person name="Fu S."/>
            <person name="Wu T."/>
            <person name="Dong H."/>
            <person name="Jin W."/>
            <person name="Fu G."/>
            <person name="Han Z."/>
            <person name="Chen Z."/>
            <person name="Wang Y."/>
        </authorList>
    </citation>
    <scope>NUCLEOTIDE SEQUENCE [MRNA] (ISOFORM 4)</scope>
    <source>
        <tissue>Hypothalamus</tissue>
    </source>
</reference>
<reference key="3">
    <citation type="submission" date="2000-07" db="EMBL/GenBank/DDBJ databases">
        <authorList>
            <person name="Xu X."/>
            <person name="Yang Y."/>
            <person name="Gao G."/>
            <person name="Xiao H."/>
            <person name="Chen Z."/>
            <person name="Han Z."/>
        </authorList>
    </citation>
    <scope>NUCLEOTIDE SEQUENCE [MRNA] (ISOFORMS 3 AND 4)</scope>
    <source>
        <tissue>Hypothalamus</tissue>
    </source>
</reference>
<reference key="4">
    <citation type="journal article" date="2004" name="Nat. Genet.">
        <title>Complete sequencing and characterization of 21,243 full-length human cDNAs.</title>
        <authorList>
            <person name="Ota T."/>
            <person name="Suzuki Y."/>
            <person name="Nishikawa T."/>
            <person name="Otsuki T."/>
            <person name="Sugiyama T."/>
            <person name="Irie R."/>
            <person name="Wakamatsu A."/>
            <person name="Hayashi K."/>
            <person name="Sato H."/>
            <person name="Nagai K."/>
            <person name="Kimura K."/>
            <person name="Makita H."/>
            <person name="Sekine M."/>
            <person name="Obayashi M."/>
            <person name="Nishi T."/>
            <person name="Shibahara T."/>
            <person name="Tanaka T."/>
            <person name="Ishii S."/>
            <person name="Yamamoto J."/>
            <person name="Saito K."/>
            <person name="Kawai Y."/>
            <person name="Isono Y."/>
            <person name="Nakamura Y."/>
            <person name="Nagahari K."/>
            <person name="Murakami K."/>
            <person name="Yasuda T."/>
            <person name="Iwayanagi T."/>
            <person name="Wagatsuma M."/>
            <person name="Shiratori A."/>
            <person name="Sudo H."/>
            <person name="Hosoiri T."/>
            <person name="Kaku Y."/>
            <person name="Kodaira H."/>
            <person name="Kondo H."/>
            <person name="Sugawara M."/>
            <person name="Takahashi M."/>
            <person name="Kanda K."/>
            <person name="Yokoi T."/>
            <person name="Furuya T."/>
            <person name="Kikkawa E."/>
            <person name="Omura Y."/>
            <person name="Abe K."/>
            <person name="Kamihara K."/>
            <person name="Katsuta N."/>
            <person name="Sato K."/>
            <person name="Tanikawa M."/>
            <person name="Yamazaki M."/>
            <person name="Ninomiya K."/>
            <person name="Ishibashi T."/>
            <person name="Yamashita H."/>
            <person name="Murakawa K."/>
            <person name="Fujimori K."/>
            <person name="Tanai H."/>
            <person name="Kimata M."/>
            <person name="Watanabe M."/>
            <person name="Hiraoka S."/>
            <person name="Chiba Y."/>
            <person name="Ishida S."/>
            <person name="Ono Y."/>
            <person name="Takiguchi S."/>
            <person name="Watanabe S."/>
            <person name="Yosida M."/>
            <person name="Hotuta T."/>
            <person name="Kusano J."/>
            <person name="Kanehori K."/>
            <person name="Takahashi-Fujii A."/>
            <person name="Hara H."/>
            <person name="Tanase T.-O."/>
            <person name="Nomura Y."/>
            <person name="Togiya S."/>
            <person name="Komai F."/>
            <person name="Hara R."/>
            <person name="Takeuchi K."/>
            <person name="Arita M."/>
            <person name="Imose N."/>
            <person name="Musashino K."/>
            <person name="Yuuki H."/>
            <person name="Oshima A."/>
            <person name="Sasaki N."/>
            <person name="Aotsuka S."/>
            <person name="Yoshikawa Y."/>
            <person name="Matsunawa H."/>
            <person name="Ichihara T."/>
            <person name="Shiohata N."/>
            <person name="Sano S."/>
            <person name="Moriya S."/>
            <person name="Momiyama H."/>
            <person name="Satoh N."/>
            <person name="Takami S."/>
            <person name="Terashima Y."/>
            <person name="Suzuki O."/>
            <person name="Nakagawa S."/>
            <person name="Senoh A."/>
            <person name="Mizoguchi H."/>
            <person name="Goto Y."/>
            <person name="Shimizu F."/>
            <person name="Wakebe H."/>
            <person name="Hishigaki H."/>
            <person name="Watanabe T."/>
            <person name="Sugiyama A."/>
            <person name="Takemoto M."/>
            <person name="Kawakami B."/>
            <person name="Yamazaki M."/>
            <person name="Watanabe K."/>
            <person name="Kumagai A."/>
            <person name="Itakura S."/>
            <person name="Fukuzumi Y."/>
            <person name="Fujimori Y."/>
            <person name="Komiyama M."/>
            <person name="Tashiro H."/>
            <person name="Tanigami A."/>
            <person name="Fujiwara T."/>
            <person name="Ono T."/>
            <person name="Yamada K."/>
            <person name="Fujii Y."/>
            <person name="Ozaki K."/>
            <person name="Hirao M."/>
            <person name="Ohmori Y."/>
            <person name="Kawabata A."/>
            <person name="Hikiji T."/>
            <person name="Kobatake N."/>
            <person name="Inagaki H."/>
            <person name="Ikema Y."/>
            <person name="Okamoto S."/>
            <person name="Okitani R."/>
            <person name="Kawakami T."/>
            <person name="Noguchi S."/>
            <person name="Itoh T."/>
            <person name="Shigeta K."/>
            <person name="Senba T."/>
            <person name="Matsumura K."/>
            <person name="Nakajima Y."/>
            <person name="Mizuno T."/>
            <person name="Morinaga M."/>
            <person name="Sasaki M."/>
            <person name="Togashi T."/>
            <person name="Oyama M."/>
            <person name="Hata H."/>
            <person name="Watanabe M."/>
            <person name="Komatsu T."/>
            <person name="Mizushima-Sugano J."/>
            <person name="Satoh T."/>
            <person name="Shirai Y."/>
            <person name="Takahashi Y."/>
            <person name="Nakagawa K."/>
            <person name="Okumura K."/>
            <person name="Nagase T."/>
            <person name="Nomura N."/>
            <person name="Kikuchi H."/>
            <person name="Masuho Y."/>
            <person name="Yamashita R."/>
            <person name="Nakai K."/>
            <person name="Yada T."/>
            <person name="Nakamura Y."/>
            <person name="Ohara O."/>
            <person name="Isogai T."/>
            <person name="Sugano S."/>
        </authorList>
    </citation>
    <scope>NUCLEOTIDE SEQUENCE [LARGE SCALE MRNA] (ISOFORMS 1 AND 5)</scope>
    <source>
        <tissue>Teratocarcinoma</tissue>
        <tissue>Uterus</tissue>
    </source>
</reference>
<reference key="5">
    <citation type="journal article" date="2007" name="BMC Genomics">
        <title>The full-ORF clone resource of the German cDNA consortium.</title>
        <authorList>
            <person name="Bechtel S."/>
            <person name="Rosenfelder H."/>
            <person name="Duda A."/>
            <person name="Schmidt C.P."/>
            <person name="Ernst U."/>
            <person name="Wellenreuther R."/>
            <person name="Mehrle A."/>
            <person name="Schuster C."/>
            <person name="Bahr A."/>
            <person name="Bloecker H."/>
            <person name="Heubner D."/>
            <person name="Hoerlein A."/>
            <person name="Michel G."/>
            <person name="Wedler H."/>
            <person name="Koehrer K."/>
            <person name="Ottenwaelder B."/>
            <person name="Poustka A."/>
            <person name="Wiemann S."/>
            <person name="Schupp I."/>
        </authorList>
    </citation>
    <scope>NUCLEOTIDE SEQUENCE [LARGE SCALE MRNA] (ISOFORM 1)</scope>
    <source>
        <tissue>Esophageal carcinoma</tissue>
    </source>
</reference>
<reference key="6">
    <citation type="journal article" date="2004" name="Nature">
        <title>The DNA sequence and comparative analysis of human chromosome 5.</title>
        <authorList>
            <person name="Schmutz J."/>
            <person name="Martin J."/>
            <person name="Terry A."/>
            <person name="Couronne O."/>
            <person name="Grimwood J."/>
            <person name="Lowry S."/>
            <person name="Gordon L.A."/>
            <person name="Scott D."/>
            <person name="Xie G."/>
            <person name="Huang W."/>
            <person name="Hellsten U."/>
            <person name="Tran-Gyamfi M."/>
            <person name="She X."/>
            <person name="Prabhakar S."/>
            <person name="Aerts A."/>
            <person name="Altherr M."/>
            <person name="Bajorek E."/>
            <person name="Black S."/>
            <person name="Branscomb E."/>
            <person name="Caoile C."/>
            <person name="Challacombe J.F."/>
            <person name="Chan Y.M."/>
            <person name="Denys M."/>
            <person name="Detter J.C."/>
            <person name="Escobar J."/>
            <person name="Flowers D."/>
            <person name="Fotopulos D."/>
            <person name="Glavina T."/>
            <person name="Gomez M."/>
            <person name="Gonzales E."/>
            <person name="Goodstein D."/>
            <person name="Grigoriev I."/>
            <person name="Groza M."/>
            <person name="Hammon N."/>
            <person name="Hawkins T."/>
            <person name="Haydu L."/>
            <person name="Israni S."/>
            <person name="Jett J."/>
            <person name="Kadner K."/>
            <person name="Kimball H."/>
            <person name="Kobayashi A."/>
            <person name="Lopez F."/>
            <person name="Lou Y."/>
            <person name="Martinez D."/>
            <person name="Medina C."/>
            <person name="Morgan J."/>
            <person name="Nandkeshwar R."/>
            <person name="Noonan J.P."/>
            <person name="Pitluck S."/>
            <person name="Pollard M."/>
            <person name="Predki P."/>
            <person name="Priest J."/>
            <person name="Ramirez L."/>
            <person name="Retterer J."/>
            <person name="Rodriguez A."/>
            <person name="Rogers S."/>
            <person name="Salamov A."/>
            <person name="Salazar A."/>
            <person name="Thayer N."/>
            <person name="Tice H."/>
            <person name="Tsai M."/>
            <person name="Ustaszewska A."/>
            <person name="Vo N."/>
            <person name="Wheeler J."/>
            <person name="Wu K."/>
            <person name="Yang J."/>
            <person name="Dickson M."/>
            <person name="Cheng J.-F."/>
            <person name="Eichler E.E."/>
            <person name="Olsen A."/>
            <person name="Pennacchio L.A."/>
            <person name="Rokhsar D.S."/>
            <person name="Richardson P."/>
            <person name="Lucas S.M."/>
            <person name="Myers R.M."/>
            <person name="Rubin E.M."/>
        </authorList>
    </citation>
    <scope>NUCLEOTIDE SEQUENCE [LARGE SCALE GENOMIC DNA]</scope>
</reference>
<reference key="7">
    <citation type="journal article" date="2004" name="Genome Res.">
        <title>The status, quality, and expansion of the NIH full-length cDNA project: the Mammalian Gene Collection (MGC).</title>
        <authorList>
            <consortium name="The MGC Project Team"/>
        </authorList>
    </citation>
    <scope>NUCLEOTIDE SEQUENCE [LARGE SCALE MRNA] (ISOFORMS 1 AND 2)</scope>
    <source>
        <tissue>Ovary</tissue>
        <tissue>Skin</tissue>
    </source>
</reference>
<reference key="8">
    <citation type="journal article" date="2006" name="Cell">
        <title>Global, in vivo, and site-specific phosphorylation dynamics in signaling networks.</title>
        <authorList>
            <person name="Olsen J.V."/>
            <person name="Blagoev B."/>
            <person name="Gnad F."/>
            <person name="Macek B."/>
            <person name="Kumar C."/>
            <person name="Mortensen P."/>
            <person name="Mann M."/>
        </authorList>
    </citation>
    <scope>PHOSPHORYLATION [LARGE SCALE ANALYSIS] AT SER-44 AND SER-46</scope>
    <scope>IDENTIFICATION BY MASS SPECTROMETRY [LARGE SCALE ANALYSIS]</scope>
    <source>
        <tissue>Cervix carcinoma</tissue>
    </source>
</reference>
<reference key="9">
    <citation type="journal article" date="2007" name="Biochem. Biophys. Res. Commun.">
        <title>RAP80 interacts with the SUMO-conjugating enzyme UBC9 and is a novel target for sumoylation.</title>
        <authorList>
            <person name="Yan J."/>
            <person name="Yang X.-P."/>
            <person name="Kim Y.-S."/>
            <person name="Joo J.H."/>
            <person name="Jetten A.M."/>
        </authorList>
    </citation>
    <scope>SUMOYLATION</scope>
    <scope>INTERACTION WITH UBE2I</scope>
    <scope>MUTAGENESIS OF LYS-9; LYS-19; LYS-31; LYS-52 AND LYS-61</scope>
</reference>
<reference key="10">
    <citation type="journal article" date="2007" name="Cancer Res.">
        <title>The ubiquitin-interacting motif containing protein RAP80 interacts with BRCA1 and functions in DNA damage repair response.</title>
        <authorList>
            <person name="Yan J."/>
            <person name="Kim Y.S."/>
            <person name="Yang X.-P."/>
            <person name="Li L.-P."/>
            <person name="Liao G."/>
            <person name="Xia F."/>
            <person name="Jetten A.M."/>
        </authorList>
    </citation>
    <scope>FUNCTION</scope>
    <scope>SUBCELLULAR LOCATION</scope>
    <scope>MUTAGENESIS OF ALA-88 AND ALA-113</scope>
    <scope>PHOSPHORYLATION AT SER-205 AND SER-402</scope>
</reference>
<reference key="11">
    <citation type="journal article" date="2007" name="Nat. Struct. Mol. Biol.">
        <title>CCDC98 targets BRCA1 to DNA damage sites.</title>
        <authorList>
            <person name="Liu Z."/>
            <person name="Wu J."/>
            <person name="Yu X."/>
        </authorList>
    </citation>
    <scope>FUNCTION</scope>
    <scope>SUBCELLULAR LOCATION</scope>
    <scope>INTERACTION WITH ABRAXAS1</scope>
</reference>
<reference key="12">
    <citation type="journal article" date="2007" name="Nat. Struct. Mol. Biol.">
        <title>CCDC98 is a BRCA1-BRCT domain-binding protein involved in the DNA damage response.</title>
        <authorList>
            <person name="Kim H."/>
            <person name="Huang J."/>
            <person name="Chen J."/>
        </authorList>
    </citation>
    <scope>INTERACTION WITH ABRAXAS1</scope>
</reference>
<reference key="13">
    <citation type="journal article" date="2007" name="Nucleic Acids Res.">
        <title>Ubiquitin-interaction motifs of RAP80 are critical in its regulation of estrogen receptor alpha.</title>
        <authorList>
            <person name="Yan J."/>
            <person name="Kim Y.S."/>
            <person name="Yang X.-P."/>
            <person name="Albers M."/>
            <person name="Koegl M."/>
            <person name="Jetten A.M."/>
        </authorList>
    </citation>
    <scope>INTERACTION WITH ESR1</scope>
</reference>
<reference key="14">
    <citation type="journal article" date="2007" name="Proc. Natl. Acad. Sci. U.S.A.">
        <title>Ubc13/Rnf8 ubiquitin ligases control foci formation of the Rap80/Abraxas/Brca1/Brcc36 complex in response to DNA damage.</title>
        <authorList>
            <person name="Wang B."/>
            <person name="Elledge S.J."/>
        </authorList>
    </citation>
    <scope>INTERACTION WITH ABRAXAS1</scope>
</reference>
<reference key="15">
    <citation type="journal article" date="2007" name="Science">
        <title>ATM and ATR substrate analysis reveals extensive protein networks responsive to DNA damage.</title>
        <authorList>
            <person name="Matsuoka S."/>
            <person name="Ballif B.A."/>
            <person name="Smogorzewska A."/>
            <person name="McDonald E.R. III"/>
            <person name="Hurov K.E."/>
            <person name="Luo J."/>
            <person name="Bakalarski C.E."/>
            <person name="Zhao Z."/>
            <person name="Solimini N."/>
            <person name="Lerenthal Y."/>
            <person name="Shiloh Y."/>
            <person name="Gygi S.P."/>
            <person name="Elledge S.J."/>
        </authorList>
    </citation>
    <scope>IDENTIFICATION BY MASS SPECTROMETRY [LARGE SCALE ANALYSIS]</scope>
    <source>
        <tissue>Embryonic kidney</tissue>
    </source>
</reference>
<reference key="16">
    <citation type="journal article" date="2007" name="Science">
        <title>Abraxas and RAP80 form a BRCA1 protein complex required for the DNA damage response.</title>
        <authorList>
            <person name="Wang B."/>
            <person name="Matsuoka S."/>
            <person name="Ballif B.A."/>
            <person name="Zhang D."/>
            <person name="Smogorzewska A."/>
            <person name="Giyi S."/>
            <person name="Elledge S.J."/>
        </authorList>
    </citation>
    <scope>FUNCTION</scope>
    <scope>SUBCELLULAR LOCATION</scope>
    <scope>PHOSPHORYLATION AT SER-140; SER-402 AND SER-419</scope>
    <scope>MUTAGENESIS OF ALA-88; SER-92; ALA-113 AND SER-117</scope>
</reference>
<reference key="17">
    <citation type="journal article" date="2007" name="Science">
        <title>RAP80 targets BRCA1 to specific ubiquitin structures at DNA damage sites.</title>
        <authorList>
            <person name="Sobhian B."/>
            <person name="Shao G."/>
            <person name="Lilli D.R."/>
            <person name="Culhane A.C."/>
            <person name="Moreau L.A."/>
            <person name="Xia B."/>
            <person name="Livingston D.M."/>
            <person name="Greenberg R.A."/>
        </authorList>
    </citation>
    <scope>FUNCTION</scope>
    <scope>IDENTIFICATION IN THE BRCA1-A COMPLEX</scope>
    <scope>SUBCELLULAR LOCATION</scope>
    <scope>UBIQUITIN-BINDING</scope>
    <scope>PHOSPHORYLATION AT SER-101</scope>
</reference>
<reference key="18">
    <citation type="journal article" date="2007" name="Science">
        <title>Ubiquitin-binding protein RAP80 mediates BRCA1-dependent DNA damage response.</title>
        <authorList>
            <person name="Kim H."/>
            <person name="Chen J."/>
            <person name="Yu X."/>
        </authorList>
    </citation>
    <scope>FUNCTION</scope>
    <scope>IDENTIFICATION IN THE BRCA1-A COMPLEX</scope>
    <scope>SUBCELLULAR LOCATION</scope>
    <scope>UBIQUITIN-BINDING</scope>
    <scope>PHOSPHORYLATION AT SER-101</scope>
    <scope>MUTAGENESIS OF ALA-88; SER-92; ALA-113 AND SER-117</scope>
</reference>
<reference key="19">
    <citation type="journal article" date="2008" name="Cancer Res.">
        <title>RAP80 responds to DNA damage induced by both ionizing radiation and UV irradiation and is phosphorylated at Ser 205.</title>
        <authorList>
            <person name="Yan J."/>
            <person name="Yang X.-P."/>
            <person name="Kim Y.-S."/>
            <person name="Jetten A.M."/>
        </authorList>
    </citation>
    <scope>PHOSPHORYLATION AT SER-205</scope>
    <scope>MUTAGENESIS OF SER-205</scope>
</reference>
<reference key="20">
    <citation type="journal article" date="2008" name="Proc. Natl. Acad. Sci. U.S.A.">
        <title>A quantitative atlas of mitotic phosphorylation.</title>
        <authorList>
            <person name="Dephoure N."/>
            <person name="Zhou C."/>
            <person name="Villen J."/>
            <person name="Beausoleil S.A."/>
            <person name="Bakalarski C.E."/>
            <person name="Elledge S.J."/>
            <person name="Gygi S.P."/>
        </authorList>
    </citation>
    <scope>PHOSPHORYLATION [LARGE SCALE ANALYSIS] AT SER-627; SER-653 AND SER-677</scope>
    <scope>IDENTIFICATION BY MASS SPECTROMETRY [LARGE SCALE ANALYSIS]</scope>
    <source>
        <tissue>Cervix carcinoma</tissue>
    </source>
</reference>
<reference key="21">
    <citation type="journal article" date="2009" name="Genes Dev.">
        <title>MERIT40 controls BRCA1-Rap80 complex integrity and recruitment to DNA double-strand breaks.</title>
        <authorList>
            <person name="Shao G."/>
            <person name="Patterson-Fortin J."/>
            <person name="Messick T.E."/>
            <person name="Feng D."/>
            <person name="Shanbhag N."/>
            <person name="Wang Y."/>
            <person name="Greenberg R.A."/>
        </authorList>
    </citation>
    <scope>IDENTIFICATION IN THE BRCA1-A COMPLEX</scope>
</reference>
<reference key="22">
    <citation type="journal article" date="2009" name="Genes Dev.">
        <title>NBA1, a new player in the Brca1 A complex, is required for DNA damage resistance and checkpoint control.</title>
        <authorList>
            <person name="Wang B."/>
            <person name="Hurov K."/>
            <person name="Hofmann K."/>
            <person name="Elledge S.J."/>
        </authorList>
    </citation>
    <scope>IDENTIFICATION IN THE BRCA1-A COMPLEX</scope>
    <scope>UBIQUITIN-BINDING</scope>
    <scope>INTERACTION WITH ABRAXAS1</scope>
</reference>
<reference key="23">
    <citation type="journal article" date="2009" name="Genes Dev.">
        <title>MERIT40 facilitates BRCA1 localization and DNA damage repair.</title>
        <authorList>
            <person name="Feng L."/>
            <person name="Huang J."/>
            <person name="Chen J."/>
        </authorList>
    </citation>
    <scope>FUNCTION</scope>
    <scope>IDENTIFICATION BY MASS SPECTROMETRY</scope>
    <scope>IDENTIFICATION IN THE BRCA1-A COMPLEX</scope>
    <scope>INTERACTION WITH ABRAXAS1</scope>
</reference>
<reference key="24">
    <citation type="journal article" date="2009" name="Mol. Cell">
        <title>Linkage-specific avidity defines the lysine 63-linked polyubiquitin-binding preference of rap80.</title>
        <authorList>
            <person name="Sims J.J."/>
            <person name="Cohen R.E."/>
        </authorList>
    </citation>
    <scope>FUNCTION IN UBIQUITIN-BINDING</scope>
    <scope>DOMAIN UIM-LINKER</scope>
    <scope>MUTAGENESIS OF 97-ARG--GLU-103 AND SER-101</scope>
</reference>
<reference key="25">
    <citation type="journal article" date="2009" name="Mol. Cell. Biol.">
        <title>Histone ubiquitination associates with BRCA1-dependent DNA damage response.</title>
        <authorList>
            <person name="Wu J."/>
            <person name="Huen M.S.Y."/>
            <person name="Lu L.-Y."/>
            <person name="Ye L."/>
            <person name="Dou Y."/>
            <person name="Ljungman M."/>
            <person name="Chen J."/>
            <person name="Yu X."/>
        </authorList>
    </citation>
    <scope>FUNCTION</scope>
    <scope>MUTAGENESIS OF CYS-508</scope>
</reference>
<reference key="26">
    <citation type="journal article" date="2009" name="Proc. Natl. Acad. Sci. U.S.A.">
        <title>The Rap80-BRCC36 de-ubiquitinating enzyme complex antagonizes RNF8-Ubc13-dependent ubiquitination events at DNA double strand breaks.</title>
        <authorList>
            <person name="Shao G."/>
            <person name="Lilli D.R."/>
            <person name="Patterson-Fortin J."/>
            <person name="Coleman K.A."/>
            <person name="Morrissey D.E."/>
            <person name="Greenberg R.A."/>
        </authorList>
    </citation>
    <scope>FUNCTION</scope>
</reference>
<reference key="27">
    <citation type="journal article" date="2009" name="Sci. Signal.">
        <title>Quantitative phosphoproteomic analysis of T cell receptor signaling reveals system-wide modulation of protein-protein interactions.</title>
        <authorList>
            <person name="Mayya V."/>
            <person name="Lundgren D.H."/>
            <person name="Hwang S.-I."/>
            <person name="Rezaul K."/>
            <person name="Wu L."/>
            <person name="Eng J.K."/>
            <person name="Rodionov V."/>
            <person name="Han D.K."/>
        </authorList>
    </citation>
    <scope>PHOSPHORYLATION [LARGE SCALE ANALYSIS] AT SER-44</scope>
    <scope>IDENTIFICATION BY MASS SPECTROMETRY [LARGE SCALE ANALYSIS]</scope>
    <source>
        <tissue>Leukemic T-cell</tissue>
    </source>
</reference>
<reference key="28">
    <citation type="journal article" date="2010" name="Sci. Signal.">
        <title>Quantitative phosphoproteomics reveals widespread full phosphorylation site occupancy during mitosis.</title>
        <authorList>
            <person name="Olsen J.V."/>
            <person name="Vermeulen M."/>
            <person name="Santamaria A."/>
            <person name="Kumar C."/>
            <person name="Miller M.L."/>
            <person name="Jensen L.J."/>
            <person name="Gnad F."/>
            <person name="Cox J."/>
            <person name="Jensen T.S."/>
            <person name="Nigg E.A."/>
            <person name="Brunak S."/>
            <person name="Mann M."/>
        </authorList>
    </citation>
    <scope>PHOSPHORYLATION [LARGE SCALE ANALYSIS] AT SER-44; SER-46 AND SER-677</scope>
    <scope>IDENTIFICATION BY MASS SPECTROMETRY [LARGE SCALE ANALYSIS]</scope>
    <source>
        <tissue>Cervix carcinoma</tissue>
    </source>
</reference>
<reference key="29">
    <citation type="journal article" date="2011" name="Sci. Signal.">
        <title>System-wide temporal characterization of the proteome and phosphoproteome of human embryonic stem cell differentiation.</title>
        <authorList>
            <person name="Rigbolt K.T."/>
            <person name="Prokhorova T.A."/>
            <person name="Akimov V."/>
            <person name="Henningsen J."/>
            <person name="Johansen P.T."/>
            <person name="Kratchmarova I."/>
            <person name="Kassem M."/>
            <person name="Mann M."/>
            <person name="Olsen J.V."/>
            <person name="Blagoev B."/>
        </authorList>
    </citation>
    <scope>PHOSPHORYLATION [LARGE SCALE ANALYSIS] AT SER-677</scope>
    <scope>IDENTIFICATION BY MASS SPECTROMETRY [LARGE SCALE ANALYSIS]</scope>
</reference>
<reference key="30">
    <citation type="journal article" date="2012" name="Mol. Cell">
        <title>Tandem protein interaction modules organize the ubiquitin-dependent response to DNA double-strand breaks.</title>
        <authorList>
            <person name="Panier S."/>
            <person name="Ichijima Y."/>
            <person name="Fradet-Turcotte A."/>
            <person name="Leung C.C."/>
            <person name="Kaustov L."/>
            <person name="Arrowsmith C.H."/>
            <person name="Durocher D."/>
        </authorList>
    </citation>
    <scope>UBIQUITIN-BINDING</scope>
    <scope>LR MOTIF</scope>
</reference>
<reference key="31">
    <citation type="journal article" date="2013" name="Cell Rep.">
        <title>A BRISC-SHMT complex deubiquitinates IFNAR1 and regulates interferon responses.</title>
        <authorList>
            <person name="Zheng H."/>
            <person name="Gupta V."/>
            <person name="Patterson-Fortin J."/>
            <person name="Bhattacharya S."/>
            <person name="Katlinski K."/>
            <person name="Wu J."/>
            <person name="Varghese B."/>
            <person name="Carbone C.J."/>
            <person name="Aressy B."/>
            <person name="Fuchs S.Y."/>
            <person name="Greenberg R.A."/>
        </authorList>
    </citation>
    <scope>IDENTIFICATION IN THE ARISC COMPLEX</scope>
</reference>
<reference key="32">
    <citation type="journal article" date="2013" name="J. Proteome Res.">
        <title>Toward a comprehensive characterization of a human cancer cell phosphoproteome.</title>
        <authorList>
            <person name="Zhou H."/>
            <person name="Di Palma S."/>
            <person name="Preisinger C."/>
            <person name="Peng M."/>
            <person name="Polat A.N."/>
            <person name="Heck A.J."/>
            <person name="Mohammed S."/>
        </authorList>
    </citation>
    <scope>PHOSPHORYLATION [LARGE SCALE ANALYSIS] AT SER-29; SER-101; SER-140; SER-466; SER-627; SER-653 AND SER-677</scope>
    <scope>IDENTIFICATION BY MASS SPECTROMETRY [LARGE SCALE ANALYSIS]</scope>
    <source>
        <tissue>Cervix carcinoma</tissue>
        <tissue>Erythroleukemia</tissue>
    </source>
</reference>
<reference key="33">
    <citation type="journal article" date="2014" name="Nat. Struct. Mol. Biol.">
        <title>Uncovering global SUMOylation signaling networks in a site-specific manner.</title>
        <authorList>
            <person name="Hendriks I.A."/>
            <person name="D'Souza R.C."/>
            <person name="Yang B."/>
            <person name="Verlaan-de Vries M."/>
            <person name="Mann M."/>
            <person name="Vertegaal A.C."/>
        </authorList>
    </citation>
    <scope>SUMOYLATION [LARGE SCALE ANALYSIS] AT LYS-20; LYS-31; LYS-382; LYS-544; LYS-562 AND LYS-607</scope>
    <scope>IDENTIFICATION BY MASS SPECTROMETRY [LARGE SCALE ANALYSIS]</scope>
</reference>
<reference key="34">
    <citation type="journal article" date="2015" name="Cell Rep.">
        <title>SUMO-2 orchestrates chromatin modifiers in response to DNA damage.</title>
        <authorList>
            <person name="Hendriks I.A."/>
            <person name="Treffers L.W."/>
            <person name="Verlaan-de Vries M."/>
            <person name="Olsen J.V."/>
            <person name="Vertegaal A.C."/>
        </authorList>
    </citation>
    <scope>SUMOYLATION [LARGE SCALE ANALYSIS] AT LYS-20</scope>
    <scope>IDENTIFICATION BY MASS SPECTROMETRY [LARGE SCALE ANALYSIS]</scope>
</reference>
<reference key="35">
    <citation type="journal article" date="2015" name="Mol. Cell. Proteomics">
        <title>System-wide analysis of SUMOylation dynamics in response to replication stress reveals novel small ubiquitin-like modified target proteins and acceptor lysines relevant for genome stability.</title>
        <authorList>
            <person name="Xiao Z."/>
            <person name="Chang J.G."/>
            <person name="Hendriks I.A."/>
            <person name="Sigurdsson J.O."/>
            <person name="Olsen J.V."/>
            <person name="Vertegaal A.C."/>
        </authorList>
    </citation>
    <scope>SUMOYLATION [LARGE SCALE ANALYSIS] AT LYS-607</scope>
    <scope>IDENTIFICATION BY MASS SPECTROMETRY [LARGE SCALE ANALYSIS]</scope>
</reference>
<reference key="36">
    <citation type="journal article" date="2016" name="Nat. Commun.">
        <title>TRAIP/RNF206 is required for recruitment of RAP80 to sites of DNA damage.</title>
        <authorList>
            <person name="Soo Lee N."/>
            <person name="Jin Chung H."/>
            <person name="Kim H.J."/>
            <person name="Yun Lee S."/>
            <person name="Ji J.H."/>
            <person name="Seo Y."/>
            <person name="Hun Han S."/>
            <person name="Choi M."/>
            <person name="Yun M."/>
            <person name="Lee S.G."/>
            <person name="Myung K."/>
            <person name="Kim Y."/>
            <person name="Chul Kang H."/>
            <person name="Kim H."/>
        </authorList>
    </citation>
    <scope>INTERACTION WITH TRAIP</scope>
</reference>
<reference key="37">
    <citation type="journal article" date="2017" name="Nat. Struct. Mol. Biol.">
        <title>Site-specific mapping of the human SUMO proteome reveals co-modification with phosphorylation.</title>
        <authorList>
            <person name="Hendriks I.A."/>
            <person name="Lyon D."/>
            <person name="Young C."/>
            <person name="Jensen L.J."/>
            <person name="Vertegaal A.C."/>
            <person name="Nielsen M.L."/>
        </authorList>
    </citation>
    <scope>SUMOYLATION [LARGE SCALE ANALYSIS] AT LYS-20; LYS-31; LYS-75; LYS-90; LYS-188; LYS-245; LYS-382; LYS-387; LYS-428; LYS-544; LYS-559; LYS-587; LYS-607; LYS-635; LYS-642; LYS-696 AND LYS-697</scope>
    <scope>IDENTIFICATION BY MASS SPECTROMETRY [LARGE SCALE ANALYSIS]</scope>
</reference>
<reference key="38">
    <citation type="submission" date="2010-06" db="PDB data bank">
        <title>The solution structure of the K63-Ub2:tUIMs complex.</title>
        <authorList>
            <person name="Sekiyama N."/>
            <person name="Jee J."/>
            <person name="Isogai S."/>
            <person name="Akagi K."/>
            <person name="Huang T."/>
            <person name="Ariyoshi M."/>
            <person name="Tochio H."/>
            <person name="Shirakawa M."/>
        </authorList>
    </citation>
    <scope>STRUCTURE BY NMR OF 79-124</scope>
    <scope>FUNCTION IN UBIQUITIN BINDING</scope>
    <scope>DOMAIN</scope>
</reference>
<reference key="39">
    <citation type="journal article" date="2014" name="J. Biol. Chem.">
        <title>Molecular basis for impaired DNA damage response function associated with the RAP80 E81 defect.</title>
        <authorList>
            <person name="Anamika X."/>
            <person name="Markin C.J."/>
            <person name="Rout M.K."/>
            <person name="Spyracopoulos L."/>
        </authorList>
    </citation>
    <scope>STRUCTURE BY NMR OF 74-131</scope>
    <scope>MUTAGENESIS OF GLU-81</scope>
    <scope>FUNCTION IN UBIQUITIN BINDING</scope>
    <scope>DOMAIN</scope>
</reference>
<reference key="40">
    <citation type="journal article" date="2009" name="Breast Cancer Res. Treat.">
        <title>Analysis of the genes coding for the BRCA1-interacting proteins, RAP80 and Abraxas (CCDC98), in high-risk, non-BRCA1/2, multiethnic breast cancer cases.</title>
        <authorList>
            <person name="Novak D.J."/>
            <person name="Sabbaghian N."/>
            <person name="Maillet P."/>
            <person name="Chappuis P.O."/>
            <person name="Foulkes W.D."/>
            <person name="Tischkowitz M."/>
        </authorList>
    </citation>
    <scope>VARIANTS TRP-15; THR-353; LEU-435 AND ARG-511</scope>
</reference>
<name>UIMC1_HUMAN</name>
<sequence length="719" mass="79727">MPRRKKKVKEVSESRNLEKKDVETTSSVSVKRKRRLEDAFIVISDSDGEEPKEENGLQKTKTKQSNRAKCLAKRKIAQMTEEEQFALALKMSEQEAREVNSQEEEEEELLRKAIAESLNSCRPSDASATRSRPLATGPSSQSHQEKTTDSGLTEGIWQLVPPSLFKGSHISQGNEAEEREEPWDHTEKTEEEPVSGSSGSWDQSSQPVFENVNVKSFDRCTGHSAEHTQCGKPQESTGRGSAFLKAVQGSGDTSRHCLPTLADAKGLQDTGGTVNYFWGIPFCPDGVDPNQYTKVILCQLEVYQKSLKMAQRQLLNKKGFGEPVLPRPPSLIQNECGQGEQASEKNECISEDMGDEDKEERQESRASDWHSKTKDFQESSIKSLKEKLLLEEEPTTSHGQSSQGIVEETSEEGNSVPASQSVAALTSKRSLVLMPESSAEEITVCPETQLSSSETFDLEREVSPGSRDILDGVRIIMADKEVGNKEDAEKEVAISTFSSSNQVSCPLCDQCFPPTKIERHAMYCNGLMEEDTVLTRRQKEAKTKSDSGTAAQTSLDIDKNEKCYLCKSLVPFREYQCHVDSCLQLAKADQGDGPEGSGRACSTVEGKWQQRLKNPKEKGHSEGRLLSFLEQSEHKTSDADIKSSETGAFRVPSPGMEEAGCSREMQSSFTRRDLNESPVKSFVSISEATDCLVDFKKQVTVQPGSRTRTKAGRGRRRKF</sequence>
<accession>Q96RL1</accession>
<accession>A8MSA1</accession>
<accession>B3KMZ1</accession>
<accession>B4E3N2</accession>
<accession>Q5XKQ1</accession>
<accession>Q7Z3W7</accession>
<accession>Q8N5B9</accession>
<accession>Q9BZR1</accession>
<accession>Q9BZR5</accession>
<accession>Q9UHX7</accession>
<proteinExistence type="evidence at protein level"/>
<gene>
    <name type="primary">UIMC1</name>
    <name type="synonym">RAP80</name>
    <name type="synonym">RXRIP110</name>
</gene>
<comment type="function">
    <text evidence="6 8 9 10 11 12 18 19 21 23 25 27">Ubiquitin-binding protein (PubMed:24627472). Specifically recognizes and binds 'Lys-63'-linked ubiquitin (PubMed:19328070, Ref.38). Plays a central role in the BRCA1-A complex by specifically binding 'Lys-63'-linked ubiquitinated histones H2A and H2AX at DNA lesions sites, leading to target the BRCA1-BARD1 heterodimer to sites of DNA damage at double-strand breaks (DSBs). The BRCA1-A complex also possesses deubiquitinase activity that specifically removes 'Lys-63'-linked ubiquitin on histones H2A and H2AX. Also weakly binds monoubiquitin but with much less affinity than 'Lys-63'-linked ubiquitin. May interact with monoubiquitinated histones H2A and H2B; the relevance of such results is however unclear in vivo. Does not bind Lys-48'-linked ubiquitin. May indirectly act as a transcriptional repressor by inhibiting the interaction of NR6A1 with the corepressor NCOR1.</text>
</comment>
<comment type="subunit">
    <text evidence="2 6 7 9 10 12 13 14 15 20 21 22 24 26">Component of the ARISC complex, at least composed of UIMC1/RAP80, ABRAXAS1, BRCC3/BRCC36, BABAM2 and BABAM1/NBA1 (PubMed:24075985). Component of the BRCA1-A complex, at least composed of the BRCA1, BARD1, UIMC1/RAP80, ABRAXAS1, BRCC3/BRCC36, BABAM2 and BABAM1/NBA1 (PubMed:17525341, PubMed:17525342, PubMed:19261746, PubMed:19261749). In the BRCA1-A complex, interacts directly with ABRAXAS1 (PubMed:17643121, PubMed:17643122, PubMed:18077395, PubMed:19261748, PubMed:19261749). Interacts with UBE2I (PubMed:17698038). Interacts with NR6A1 (PubMed:12080054). Interacts with ESR1 (PubMed:17311814). Interacts with TSP57 (By similarity). Interacts with TRAIP (PubMed:26781088).</text>
</comment>
<comment type="interaction">
    <interactant intactId="EBI-725300">
        <id>Q96RL1</id>
    </interactant>
    <interactant intactId="EBI-1263451">
        <id>Q6UWZ7</id>
        <label>ABRAXAS1</label>
    </interactant>
    <organismsDiffer>false</organismsDiffer>
    <experiments>9</experiments>
</comment>
<comment type="interaction">
    <interactant intactId="EBI-725300">
        <id>Q96RL1</id>
    </interactant>
    <interactant intactId="EBI-621372">
        <id>P54132</id>
        <label>BLM</label>
    </interactant>
    <organismsDiffer>false</organismsDiffer>
    <experiments>2</experiments>
</comment>
<comment type="interaction">
    <interactant intactId="EBI-725300">
        <id>Q96RL1</id>
    </interactant>
    <interactant intactId="EBI-349905">
        <id>P38398</id>
        <label>BRCA1</label>
    </interactant>
    <organismsDiffer>false</organismsDiffer>
    <experiments>13</experiments>
</comment>
<comment type="interaction">
    <interactant intactId="EBI-725300">
        <id>Q96RL1</id>
    </interactant>
    <interactant intactId="EBI-740850">
        <id>O14641</id>
        <label>DVL2</label>
    </interactant>
    <organismsDiffer>false</organismsDiffer>
    <experiments>4</experiments>
</comment>
<comment type="interaction">
    <interactant intactId="EBI-9640371">
        <id>Q96RL1-1</id>
    </interactant>
    <interactant intactId="EBI-1263451">
        <id>Q6UWZ7</id>
        <label>ABRAXAS1</label>
    </interactant>
    <organismsDiffer>false</organismsDiffer>
    <experiments>4</experiments>
</comment>
<comment type="interaction">
    <interactant intactId="EBI-9640371">
        <id>Q96RL1-1</id>
    </interactant>
    <interactant intactId="EBI-349905">
        <id>P38398</id>
        <label>BRCA1</label>
    </interactant>
    <organismsDiffer>false</organismsDiffer>
    <experiments>2</experiments>
</comment>
<comment type="interaction">
    <interactant intactId="EBI-9640371">
        <id>Q96RL1-1</id>
    </interactant>
    <interactant intactId="EBI-750352">
        <id>P46736</id>
        <label>BRCC3</label>
    </interactant>
    <organismsDiffer>false</organismsDiffer>
    <experiments>4</experiments>
</comment>
<comment type="interaction">
    <interactant intactId="EBI-17761788">
        <id>Q96RL1-2</id>
    </interactant>
    <interactant intactId="EBI-25840379">
        <id>Q14203-5</id>
        <label>DCTN1</label>
    </interactant>
    <organismsDiffer>false</organismsDiffer>
    <experiments>3</experiments>
</comment>
<comment type="interaction">
    <interactant intactId="EBI-17761788">
        <id>Q96RL1-2</id>
    </interactant>
    <interactant intactId="EBI-21251460">
        <id>O60260-5</id>
        <label>PRKN</label>
    </interactant>
    <organismsDiffer>false</organismsDiffer>
    <experiments>3</experiments>
</comment>
<comment type="interaction">
    <interactant intactId="EBI-17761788">
        <id>Q96RL1-2</id>
    </interactant>
    <interactant intactId="EBI-746453">
        <id>P54725</id>
        <label>RAD23A</label>
    </interactant>
    <organismsDiffer>false</organismsDiffer>
    <experiments>3</experiments>
</comment>
<comment type="interaction">
    <interactant intactId="EBI-17761788">
        <id>Q96RL1-2</id>
    </interactant>
    <interactant intactId="EBI-396669">
        <id>Q9Y3C5</id>
        <label>RNF11</label>
    </interactant>
    <organismsDiffer>false</organismsDiffer>
    <experiments>3</experiments>
</comment>
<comment type="interaction">
    <interactant intactId="EBI-17761788">
        <id>Q96RL1-2</id>
    </interactant>
    <interactant intactId="EBI-985879">
        <id>P37840</id>
        <label>SNCA</label>
    </interactant>
    <organismsDiffer>false</organismsDiffer>
    <experiments>3</experiments>
</comment>
<comment type="subcellular location">
    <subcellularLocation>
        <location evidence="6 8 9 10 11 12">Nucleus</location>
    </subcellularLocation>
    <text>Localizes at sites of DNA damage at double-strand breaks (DSBs).</text>
</comment>
<comment type="alternative products">
    <event type="alternative splicing"/>
    <isoform>
        <id>Q96RL1-1</id>
        <name>1</name>
        <sequence type="displayed"/>
    </isoform>
    <isoform>
        <id>Q96RL1-2</id>
        <name>2</name>
        <sequence type="described" ref="VSP_012935"/>
    </isoform>
    <isoform>
        <id>Q96RL1-3</id>
        <name>3</name>
        <name>XHRIP110</name>
        <sequence type="described" ref="VSP_012932"/>
    </isoform>
    <isoform>
        <id>Q96RL1-4</id>
        <name>4</name>
        <name>X2HRIP110</name>
        <sequence type="described" ref="VSP_012933 VSP_012934"/>
    </isoform>
    <isoform>
        <id>Q96RL1-5</id>
        <name>5</name>
        <sequence type="described" ref="VSP_037264 VSP_037265"/>
    </isoform>
</comment>
<comment type="tissue specificity">
    <text evidence="6">Expressed in testis, ovary, thymus and heart. Expressed in germ cells of the testis.</text>
</comment>
<comment type="domain">
    <text evidence="2 23 25 27">The tandem UIM domains form a continuous 60 Angstrom-long alpha-helix and mediate binding to 'Lys-63'-linked ubiquitins. UIM1 and UIM2 bind to the proximal and distal ubiquitin moieties and recognize an 'Ile-44'-centered hydrophobic patch. Since UIMs don't interact with the 'Lys-63' isopeptide bond the UIM-linker region between the 2 UIM domains determines the selectivity for 'Lys-63'-linkage, and its length is very important for specificity.</text>
</comment>
<comment type="domain">
    <text evidence="23">The Abraxas-interacting region (AIR) mediates the interaction with ABRAXAS1.</text>
</comment>
<comment type="PTM">
    <text evidence="14">Sumoylated.</text>
</comment>
<comment type="PTM">
    <text evidence="8 9 10 11 16">Phosphorylated upon DNA damage by ATM or ATR.</text>
</comment>
<comment type="similarity">
    <text evidence="32">Belongs to the RAP80 family.</text>
</comment>
<comment type="sequence caution" evidence="32">
    <conflict type="erroneous termination">
        <sequence resource="EMBL-CDS" id="AAH06078"/>
    </conflict>
    <text>Truncated C-terminus.</text>
</comment>
<feature type="chain" id="PRO_0000097547" description="BRCA1-A complex subunit RAP80">
    <location>
        <begin position="1"/>
        <end position="719"/>
    </location>
</feature>
<feature type="domain" description="UIM 1" evidence="3">
    <location>
        <begin position="80"/>
        <end position="99"/>
    </location>
</feature>
<feature type="domain" description="UIM 2" evidence="3">
    <location>
        <begin position="105"/>
        <end position="124"/>
    </location>
</feature>
<feature type="zinc finger region" description="UBZ4-type" evidence="4">
    <location>
        <begin position="502"/>
        <end position="529"/>
    </location>
</feature>
<feature type="region of interest" description="Necessary for transcriptional repression">
    <location>
        <begin position="1"/>
        <end position="101"/>
    </location>
</feature>
<feature type="region of interest" description="Disordered" evidence="5">
    <location>
        <begin position="1"/>
        <end position="30"/>
    </location>
</feature>
<feature type="region of interest" description="Disordered" evidence="5">
    <location>
        <begin position="43"/>
        <end position="68"/>
    </location>
</feature>
<feature type="region of interest" description="Disordered" evidence="5">
    <location>
        <begin position="93"/>
        <end position="152"/>
    </location>
</feature>
<feature type="region of interest" description="UIM-linker">
    <location>
        <begin position="97"/>
        <end position="103"/>
    </location>
</feature>
<feature type="region of interest" description="Necessary for interaction with NR6A1 N-terminus">
    <location>
        <begin position="100"/>
        <end position="200"/>
    </location>
</feature>
<feature type="region of interest" description="Disordered" evidence="5">
    <location>
        <begin position="164"/>
        <end position="205"/>
    </location>
</feature>
<feature type="region of interest" description="AIR">
    <location>
        <begin position="270"/>
        <end position="400"/>
    </location>
</feature>
<feature type="region of interest" description="Disordered" evidence="5">
    <location>
        <begin position="320"/>
        <end position="378"/>
    </location>
</feature>
<feature type="region of interest" description="Disordered" evidence="5">
    <location>
        <begin position="391"/>
        <end position="422"/>
    </location>
</feature>
<feature type="region of interest" description="Necessary for interaction with NR6A1 C-terminus">
    <location>
        <begin position="400"/>
        <end position="500"/>
    </location>
</feature>
<feature type="region of interest" description="Zinc-finger-like region">
    <location>
        <begin position="505"/>
        <end position="582"/>
    </location>
</feature>
<feature type="region of interest" description="Disordered" evidence="5">
    <location>
        <begin position="588"/>
        <end position="668"/>
    </location>
</feature>
<feature type="short sequence motif" description="LR motif">
    <location>
        <begin position="60"/>
        <end position="78"/>
    </location>
</feature>
<feature type="compositionally biased region" description="Basic and acidic residues" evidence="5">
    <location>
        <begin position="9"/>
        <end position="23"/>
    </location>
</feature>
<feature type="compositionally biased region" description="Polar residues" evidence="5">
    <location>
        <begin position="117"/>
        <end position="130"/>
    </location>
</feature>
<feature type="compositionally biased region" description="Low complexity" evidence="5">
    <location>
        <begin position="195"/>
        <end position="205"/>
    </location>
</feature>
<feature type="compositionally biased region" description="Acidic residues" evidence="5">
    <location>
        <begin position="349"/>
        <end position="358"/>
    </location>
</feature>
<feature type="compositionally biased region" description="Basic and acidic residues" evidence="5">
    <location>
        <begin position="359"/>
        <end position="378"/>
    </location>
</feature>
<feature type="compositionally biased region" description="Polar residues" evidence="5">
    <location>
        <begin position="412"/>
        <end position="422"/>
    </location>
</feature>
<feature type="compositionally biased region" description="Basic and acidic residues" evidence="5">
    <location>
        <begin position="614"/>
        <end position="623"/>
    </location>
</feature>
<feature type="compositionally biased region" description="Basic and acidic residues" evidence="5">
    <location>
        <begin position="631"/>
        <end position="643"/>
    </location>
</feature>
<feature type="binding site" evidence="4">
    <location>
        <position position="505"/>
    </location>
    <ligand>
        <name>Zn(2+)</name>
        <dbReference type="ChEBI" id="CHEBI:29105"/>
    </ligand>
</feature>
<feature type="binding site" evidence="4">
    <location>
        <position position="508"/>
    </location>
    <ligand>
        <name>Zn(2+)</name>
        <dbReference type="ChEBI" id="CHEBI:29105"/>
    </ligand>
</feature>
<feature type="binding site" evidence="4">
    <location>
        <position position="520"/>
    </location>
    <ligand>
        <name>Zn(2+)</name>
        <dbReference type="ChEBI" id="CHEBI:29105"/>
    </ligand>
</feature>
<feature type="binding site" evidence="4">
    <location>
        <position position="524"/>
    </location>
    <ligand>
        <name>Zn(2+)</name>
        <dbReference type="ChEBI" id="CHEBI:29105"/>
    </ligand>
</feature>
<feature type="modified residue" description="Phosphoserine" evidence="38">
    <location>
        <position position="29"/>
    </location>
</feature>
<feature type="modified residue" description="Phosphoserine" evidence="33 35 36">
    <location>
        <position position="44"/>
    </location>
</feature>
<feature type="modified residue" description="Phosphoserine" evidence="33 36">
    <location>
        <position position="46"/>
    </location>
</feature>
<feature type="modified residue" description="Phosphoserine" evidence="9 10 38">
    <location>
        <position position="101"/>
    </location>
</feature>
<feature type="modified residue" description="Phosphoserine" evidence="8 38">
    <location>
        <position position="140"/>
    </location>
</feature>
<feature type="modified residue" description="Phosphoserine" evidence="11 16">
    <location>
        <position position="205"/>
    </location>
</feature>
<feature type="modified residue" description="Phosphoserine" evidence="1">
    <location>
        <position position="379"/>
    </location>
</feature>
<feature type="modified residue" description="Phosphoserine" evidence="8 11">
    <location>
        <position position="402"/>
    </location>
</feature>
<feature type="modified residue" description="Phosphoserine" evidence="8">
    <location>
        <position position="419"/>
    </location>
</feature>
<feature type="modified residue" description="Phosphoserine" evidence="38">
    <location>
        <position position="466"/>
    </location>
</feature>
<feature type="modified residue" description="Phosphoserine" evidence="34 38">
    <location>
        <position position="627"/>
    </location>
</feature>
<feature type="modified residue" description="Phosphoserine" evidence="34 38">
    <location>
        <position position="653"/>
    </location>
</feature>
<feature type="modified residue" description="Phosphoserine" evidence="34 36 37 38">
    <location>
        <position position="677"/>
    </location>
</feature>
<feature type="cross-link" description="Glycyl lysine isopeptide (Lys-Gly) (interchain with G-Cter in SUMO2)" evidence="39 41 42">
    <location>
        <position position="20"/>
    </location>
</feature>
<feature type="cross-link" description="Glycyl lysine isopeptide (Lys-Gly) (interchain with G-Cter in SUMO2)" evidence="39 42">
    <location>
        <position position="31"/>
    </location>
</feature>
<feature type="cross-link" description="Glycyl lysine isopeptide (Lys-Gly) (interchain with G-Cter in SUMO2)" evidence="42">
    <location>
        <position position="75"/>
    </location>
</feature>
<feature type="cross-link" description="Glycyl lysine isopeptide (Lys-Gly) (interchain with G-Cter in SUMO2)" evidence="42">
    <location>
        <position position="90"/>
    </location>
</feature>
<feature type="cross-link" description="Glycyl lysine isopeptide (Lys-Gly) (interchain with G-Cter in SUMO2)" evidence="42">
    <location>
        <position position="188"/>
    </location>
</feature>
<feature type="cross-link" description="Glycyl lysine isopeptide (Lys-Gly) (interchain with G-Cter in SUMO2)" evidence="42">
    <location>
        <position position="245"/>
    </location>
</feature>
<feature type="cross-link" description="Glycyl lysine isopeptide (Lys-Gly) (interchain with G-Cter in SUMO2)" evidence="39 42">
    <location>
        <position position="382"/>
    </location>
</feature>
<feature type="cross-link" description="Glycyl lysine isopeptide (Lys-Gly) (interchain with G-Cter in SUMO2)" evidence="42">
    <location>
        <position position="387"/>
    </location>
</feature>
<feature type="cross-link" description="Glycyl lysine isopeptide (Lys-Gly) (interchain with G-Cter in SUMO2)" evidence="42">
    <location>
        <position position="428"/>
    </location>
</feature>
<feature type="cross-link" description="Glycyl lysine isopeptide (Lys-Gly) (interchain with G-Cter in SUMO2)" evidence="39 42">
    <location>
        <position position="544"/>
    </location>
</feature>
<feature type="cross-link" description="Glycyl lysine isopeptide (Lys-Gly) (interchain with G-Cter in SUMO2)" evidence="42">
    <location>
        <position position="559"/>
    </location>
</feature>
<feature type="cross-link" description="Glycyl lysine isopeptide (Lys-Gly) (interchain with G-Cter in SUMO2)" evidence="39">
    <location>
        <position position="562"/>
    </location>
</feature>
<feature type="cross-link" description="Glycyl lysine isopeptide (Lys-Gly) (interchain with G-Cter in SUMO2)" evidence="42">
    <location>
        <position position="587"/>
    </location>
</feature>
<feature type="cross-link" description="Glycyl lysine isopeptide (Lys-Gly) (interchain with G-Cter in SUMO2)" evidence="39 40 42">
    <location>
        <position position="607"/>
    </location>
</feature>
<feature type="cross-link" description="Glycyl lysine isopeptide (Lys-Gly) (interchain with G-Cter in SUMO2)" evidence="42">
    <location>
        <position position="635"/>
    </location>
</feature>
<feature type="cross-link" description="Glycyl lysine isopeptide (Lys-Gly) (interchain with G-Cter in SUMO2)" evidence="42">
    <location>
        <position position="642"/>
    </location>
</feature>
<feature type="cross-link" description="Glycyl lysine isopeptide (Lys-Gly) (interchain with G-Cter in SUMO2)" evidence="42">
    <location>
        <position position="696"/>
    </location>
</feature>
<feature type="cross-link" description="Glycyl lysine isopeptide (Lys-Gly) (interchain with G-Cter in SUMO2)" evidence="42">
    <location>
        <position position="697"/>
    </location>
</feature>
<feature type="splice variant" id="VSP_012933" description="In isoform 4." evidence="30 31">
    <location>
        <begin position="1"/>
        <end position="370"/>
    </location>
</feature>
<feature type="splice variant" id="VSP_012932" description="In isoform 3." evidence="31">
    <location>
        <begin position="1"/>
        <end position="78"/>
    </location>
</feature>
<feature type="splice variant" id="VSP_037264" description="In isoform 5." evidence="28">
    <original>SCRPSDASATRSRPLATGPSSQSHQEKTTDSGL</original>
    <variation>VNMPCCKSLWRLISYIFDFCGVVVALGTSCSHL</variation>
    <location>
        <begin position="120"/>
        <end position="152"/>
    </location>
</feature>
<feature type="splice variant" id="VSP_037265" description="In isoform 5." evidence="28">
    <location>
        <begin position="153"/>
        <end position="719"/>
    </location>
</feature>
<feature type="splice variant" id="VSP_012935" description="In isoform 2." evidence="29">
    <location>
        <begin position="234"/>
        <end position="399"/>
    </location>
</feature>
<feature type="splice variant" id="VSP_012934" description="In isoform 4." evidence="30 31">
    <original>SKTKDFQESSIKSLKEKLLLEEEPTTSHGQ</original>
    <variation>MLPLPDLDLWPLDRLPSPIKRKPQTLGSLK</variation>
    <location>
        <begin position="371"/>
        <end position="400"/>
    </location>
</feature>
<feature type="sequence variant" id="VAR_051469" description="In dbSNP:rs13167812." evidence="17">
    <original>R</original>
    <variation>W</variation>
    <location>
        <position position="15"/>
    </location>
</feature>
<feature type="sequence variant" id="VAR_055328" description="In dbSNP:rs143282828." evidence="17">
    <original>M</original>
    <variation>T</variation>
    <location>
        <position position="353"/>
    </location>
</feature>
<feature type="sequence variant" id="VAR_051470" description="In dbSNP:rs3733876." evidence="17">
    <original>P</original>
    <variation>L</variation>
    <location>
        <position position="435"/>
    </location>
</feature>
<feature type="sequence variant" id="VAR_051471" description="In dbSNP:rs13360277." evidence="17">
    <original>C</original>
    <variation>R</variation>
    <location>
        <position position="511"/>
    </location>
</feature>
<feature type="sequence variant" id="VAR_051472" description="In dbSNP:rs10475633.">
    <original>G</original>
    <variation>E</variation>
    <location>
        <position position="596"/>
    </location>
</feature>
<feature type="mutagenesis site" description="Does not affect symoylation; when associated with A-19; A-31; A-52 and A-61." evidence="14">
    <original>K</original>
    <variation>A</variation>
    <location>
        <position position="9"/>
    </location>
</feature>
<feature type="mutagenesis site" description="Does not affect symoylation; when associated with A-9; A-31; A-52 and A-61." evidence="14">
    <original>K</original>
    <variation>A</variation>
    <location>
        <position position="19"/>
    </location>
</feature>
<feature type="mutagenesis site" description="Does not affect symoylation; when associated with A-9; A-19; A-52 and A-61." evidence="14">
    <original>K</original>
    <variation>A</variation>
    <location>
        <position position="31"/>
    </location>
</feature>
<feature type="mutagenesis site" description="Does not affect symoylation; when associated with A-9; A-19; A-31 and A-61." evidence="14">
    <original>K</original>
    <variation>A</variation>
    <location>
        <position position="52"/>
    </location>
</feature>
<feature type="mutagenesis site" description="Does not affect symoylation; when associated with A-9; A-19; A-31 and A-52." evidence="14">
    <original>K</original>
    <variation>A</variation>
    <location>
        <position position="61"/>
    </location>
</feature>
<feature type="mutagenesis site" description="Strongly reduces ubiquitin binding via UIM 1." evidence="25">
    <location>
        <position position="81"/>
    </location>
</feature>
<feature type="mutagenesis site" description="Impairs localization to DNA damages sites; when associated with A-92; S-113 and A-117." evidence="8 10 11">
    <original>A</original>
    <variation>G</variation>
    <variation>S</variation>
    <location>
        <position position="88"/>
    </location>
</feature>
<feature type="mutagenesis site" description="Impairs localization to DNA damages sites; when associated with S-88; S-113 and A-117." evidence="8 10">
    <original>S</original>
    <variation>A</variation>
    <location>
        <position position="92"/>
    </location>
</feature>
<feature type="mutagenesis site" description="Impairs the selectivity for 'K-63'-linked ubiquitin." evidence="23">
    <original>REVNSQE</original>
    <variation>AA</variation>
    <location>
        <begin position="97"/>
        <end position="103"/>
    </location>
</feature>
<feature type="mutagenesis site" description="Increases the selectivity for 'K-63'-linked ubiquitin." evidence="23">
    <original>REVNSQE</original>
    <variation>AAAAAAA</variation>
    <location>
        <begin position="97"/>
        <end position="103"/>
    </location>
</feature>
<feature type="mutagenesis site" description="Impairs the selectivity for 'K-63'-linked ubiquitin." evidence="23">
    <original>REVNSQE</original>
    <variation>AAAAAAAAA</variation>
    <location>
        <begin position="97"/>
        <end position="103"/>
    </location>
</feature>
<feature type="mutagenesis site" description="Slightly impairs the selectivity for 'K-63'-linked ubiquitin." evidence="23">
    <original>S</original>
    <variation>A</variation>
    <variation>E</variation>
    <location>
        <position position="101"/>
    </location>
</feature>
<feature type="mutagenesis site" description="Impairs ubiquitin-binding and localization to DNA damages sites; when associated with S-88; A-92 and A-117." evidence="8 10 11">
    <original>A</original>
    <variation>G</variation>
    <variation>S</variation>
    <location>
        <position position="113"/>
    </location>
</feature>
<feature type="mutagenesis site" description="Impairs ubiquitin-binding and localization to DNA damages sites; when associated with S-88; A-92 and S-113." evidence="8 10">
    <original>S</original>
    <variation>A</variation>
    <location>
        <position position="117"/>
    </location>
</feature>
<feature type="mutagenesis site" description="Abolishes phosphorylation at this position." evidence="16">
    <original>S</original>
    <variation>G</variation>
    <location>
        <position position="205"/>
    </location>
</feature>
<feature type="mutagenesis site" description="Abolishes interaction with histone monoubiquitinated H2B without affecting the interaction with H2A." evidence="18">
    <original>C</original>
    <variation>A</variation>
    <location>
        <position position="508"/>
    </location>
</feature>
<feature type="sequence conflict" description="In Ref. 7; AAH06078." evidence="32" ref="7">
    <original>E</original>
    <variation>K</variation>
    <location>
        <position position="187"/>
    </location>
</feature>
<feature type="sequence conflict" description="In Ref. 4; BAG51153." evidence="32" ref="4">
    <original>E</original>
    <variation>G</variation>
    <location>
        <position position="192"/>
    </location>
</feature>
<feature type="sequence conflict" description="In Ref. 3; AAG59851." evidence="32" ref="3">
    <original>V</original>
    <variation>C</variation>
    <location>
        <position position="247"/>
    </location>
</feature>
<feature type="sequence conflict" description="In Ref. 1; AAK61871." evidence="32" ref="1">
    <original>E</original>
    <variation>G</variation>
    <location>
        <position position="347"/>
    </location>
</feature>
<feature type="sequence conflict" description="In Ref. 1; AAK61871." evidence="32" ref="1">
    <original>E</original>
    <variation>G</variation>
    <location>
        <position position="518"/>
    </location>
</feature>
<feature type="sequence conflict" description="In Ref. 3; AAG59855." evidence="32" ref="3">
    <original>H</original>
    <variation>R</variation>
    <location>
        <position position="634"/>
    </location>
</feature>
<feature type="sequence conflict" description="In Ref. 4; BAG51153." evidence="32" ref="4">
    <original>D</original>
    <variation>N</variation>
    <location>
        <position position="638"/>
    </location>
</feature>
<feature type="sequence conflict" description="In Ref. 3; AAG59855." evidence="32" ref="3">
    <original>D</original>
    <variation>V</variation>
    <location>
        <position position="694"/>
    </location>
</feature>
<feature type="strand" evidence="44">
    <location>
        <begin position="40"/>
        <end position="43"/>
    </location>
</feature>
<feature type="helix" evidence="43">
    <location>
        <begin position="84"/>
        <end position="94"/>
    </location>
</feature>
<feature type="helix" evidence="43">
    <location>
        <begin position="101"/>
        <end position="119"/>
    </location>
</feature>